<organism>
    <name type="scientific">Mycobacterium tuberculosis (strain CDC 1551 / Oshkosh)</name>
    <dbReference type="NCBI Taxonomy" id="83331"/>
    <lineage>
        <taxon>Bacteria</taxon>
        <taxon>Bacillati</taxon>
        <taxon>Actinomycetota</taxon>
        <taxon>Actinomycetes</taxon>
        <taxon>Mycobacteriales</taxon>
        <taxon>Mycobacteriaceae</taxon>
        <taxon>Mycobacterium</taxon>
        <taxon>Mycobacterium tuberculosis complex</taxon>
    </lineage>
</organism>
<name>RIMM_MYCTO</name>
<feature type="chain" id="PRO_0000428264" description="Ribosome maturation factor RimM">
    <location>
        <begin position="1"/>
        <end position="176"/>
    </location>
</feature>
<feature type="domain" description="PRC barrel" evidence="1">
    <location>
        <begin position="100"/>
        <end position="172"/>
    </location>
</feature>
<reference key="1">
    <citation type="journal article" date="2002" name="J. Bacteriol.">
        <title>Whole-genome comparison of Mycobacterium tuberculosis clinical and laboratory strains.</title>
        <authorList>
            <person name="Fleischmann R.D."/>
            <person name="Alland D."/>
            <person name="Eisen J.A."/>
            <person name="Carpenter L."/>
            <person name="White O."/>
            <person name="Peterson J.D."/>
            <person name="DeBoy R.T."/>
            <person name="Dodson R.J."/>
            <person name="Gwinn M.L."/>
            <person name="Haft D.H."/>
            <person name="Hickey E.K."/>
            <person name="Kolonay J.F."/>
            <person name="Nelson W.C."/>
            <person name="Umayam L.A."/>
            <person name="Ermolaeva M.D."/>
            <person name="Salzberg S.L."/>
            <person name="Delcher A."/>
            <person name="Utterback T.R."/>
            <person name="Weidman J.F."/>
            <person name="Khouri H.M."/>
            <person name="Gill J."/>
            <person name="Mikula A."/>
            <person name="Bishai W."/>
            <person name="Jacobs W.R. Jr."/>
            <person name="Venter J.C."/>
            <person name="Fraser C.M."/>
        </authorList>
    </citation>
    <scope>NUCLEOTIDE SEQUENCE [LARGE SCALE GENOMIC DNA]</scope>
    <source>
        <strain>CDC 1551 / Oshkosh</strain>
    </source>
</reference>
<keyword id="KW-0143">Chaperone</keyword>
<keyword id="KW-0963">Cytoplasm</keyword>
<keyword id="KW-1185">Reference proteome</keyword>
<keyword id="KW-0690">Ribosome biogenesis</keyword>
<keyword id="KW-0698">rRNA processing</keyword>
<evidence type="ECO:0000255" key="1">
    <source>
        <dbReference type="HAMAP-Rule" id="MF_00014"/>
    </source>
</evidence>
<accession>P9WH18</accession>
<accession>L0TCL1</accession>
<accession>P66653</accession>
<accession>Q10824</accession>
<gene>
    <name evidence="1" type="primary">rimM</name>
    <name type="ordered locus">MT2975</name>
</gene>
<protein>
    <recommendedName>
        <fullName evidence="1">Ribosome maturation factor RimM</fullName>
    </recommendedName>
</protein>
<sequence>MELVVGRVVKSHGVTGEVVVEIRTDDPADRFAPGTRLRAKGPFDGGAEGSAVSYVIESVRQHGGRLLVRLAGVADRDAADALRGSLFVIDADDLPPIDEPDTYYDHQLVGLMVQTATGEGVGVVTEVVHTAAGELLAVKRDSDEVLVPFVRAIVTSVSLDDGIVEIDPPHGLLNLE</sequence>
<dbReference type="EMBL" id="AE000516">
    <property type="protein sequence ID" value="AAK47301.1"/>
    <property type="molecule type" value="Genomic_DNA"/>
</dbReference>
<dbReference type="PIR" id="F70927">
    <property type="entry name" value="F70927"/>
</dbReference>
<dbReference type="RefSeq" id="WP_003414726.1">
    <property type="nucleotide sequence ID" value="NZ_KK341227.1"/>
</dbReference>
<dbReference type="SMR" id="P9WH18"/>
<dbReference type="GeneID" id="45426894"/>
<dbReference type="KEGG" id="mtc:MT2975"/>
<dbReference type="PATRIC" id="fig|83331.31.peg.3215"/>
<dbReference type="HOGENOM" id="CLU_077636_0_0_11"/>
<dbReference type="Proteomes" id="UP000001020">
    <property type="component" value="Chromosome"/>
</dbReference>
<dbReference type="GO" id="GO:0005737">
    <property type="term" value="C:cytoplasm"/>
    <property type="evidence" value="ECO:0007669"/>
    <property type="project" value="UniProtKB-SubCell"/>
</dbReference>
<dbReference type="GO" id="GO:0005840">
    <property type="term" value="C:ribosome"/>
    <property type="evidence" value="ECO:0007669"/>
    <property type="project" value="InterPro"/>
</dbReference>
<dbReference type="GO" id="GO:0043022">
    <property type="term" value="F:ribosome binding"/>
    <property type="evidence" value="ECO:0007669"/>
    <property type="project" value="InterPro"/>
</dbReference>
<dbReference type="GO" id="GO:0042274">
    <property type="term" value="P:ribosomal small subunit biogenesis"/>
    <property type="evidence" value="ECO:0007669"/>
    <property type="project" value="UniProtKB-UniRule"/>
</dbReference>
<dbReference type="GO" id="GO:0006364">
    <property type="term" value="P:rRNA processing"/>
    <property type="evidence" value="ECO:0007669"/>
    <property type="project" value="UniProtKB-UniRule"/>
</dbReference>
<dbReference type="Gene3D" id="2.30.30.240">
    <property type="entry name" value="PRC-barrel domain"/>
    <property type="match status" value="1"/>
</dbReference>
<dbReference type="Gene3D" id="2.40.30.60">
    <property type="entry name" value="RimM"/>
    <property type="match status" value="1"/>
</dbReference>
<dbReference type="HAMAP" id="MF_00014">
    <property type="entry name" value="Ribosome_mat_RimM"/>
    <property type="match status" value="1"/>
</dbReference>
<dbReference type="InterPro" id="IPR011033">
    <property type="entry name" value="PRC_barrel-like_sf"/>
</dbReference>
<dbReference type="InterPro" id="IPR056792">
    <property type="entry name" value="PRC_RimM"/>
</dbReference>
<dbReference type="InterPro" id="IPR011961">
    <property type="entry name" value="RimM"/>
</dbReference>
<dbReference type="InterPro" id="IPR002676">
    <property type="entry name" value="RimM_N"/>
</dbReference>
<dbReference type="InterPro" id="IPR036976">
    <property type="entry name" value="RimM_N_sf"/>
</dbReference>
<dbReference type="InterPro" id="IPR009000">
    <property type="entry name" value="Transl_B-barrel_sf"/>
</dbReference>
<dbReference type="NCBIfam" id="TIGR02273">
    <property type="entry name" value="16S_RimM"/>
    <property type="match status" value="1"/>
</dbReference>
<dbReference type="PANTHER" id="PTHR33692">
    <property type="entry name" value="RIBOSOME MATURATION FACTOR RIMM"/>
    <property type="match status" value="1"/>
</dbReference>
<dbReference type="PANTHER" id="PTHR33692:SF1">
    <property type="entry name" value="RIBOSOME MATURATION FACTOR RIMM"/>
    <property type="match status" value="1"/>
</dbReference>
<dbReference type="Pfam" id="PF24986">
    <property type="entry name" value="PRC_RimM"/>
    <property type="match status" value="1"/>
</dbReference>
<dbReference type="Pfam" id="PF01782">
    <property type="entry name" value="RimM"/>
    <property type="match status" value="1"/>
</dbReference>
<dbReference type="SUPFAM" id="SSF50346">
    <property type="entry name" value="PRC-barrel domain"/>
    <property type="match status" value="1"/>
</dbReference>
<dbReference type="SUPFAM" id="SSF50447">
    <property type="entry name" value="Translation proteins"/>
    <property type="match status" value="1"/>
</dbReference>
<comment type="function">
    <text evidence="1">An accessory protein needed during the final step in the assembly of 30S ribosomal subunit, possibly for assembly of the head region. Essential for efficient processing of 16S rRNA. May be needed both before and after RbfA during the maturation of 16S rRNA. It has affinity for free ribosomal 30S subunits but not for 70S ribosomes.</text>
</comment>
<comment type="subunit">
    <text evidence="1">Binds ribosomal protein uS19.</text>
</comment>
<comment type="subcellular location">
    <subcellularLocation>
        <location evidence="1">Cytoplasm</location>
    </subcellularLocation>
</comment>
<comment type="domain">
    <text evidence="1">The PRC barrel domain binds ribosomal protein uS19.</text>
</comment>
<comment type="similarity">
    <text evidence="1">Belongs to the RimM family.</text>
</comment>
<proteinExistence type="inferred from homology"/>